<organism>
    <name type="scientific">Lysinibacillus sphaericus</name>
    <name type="common">Bacillus sphaericus</name>
    <dbReference type="NCBI Taxonomy" id="1421"/>
    <lineage>
        <taxon>Bacteria</taxon>
        <taxon>Bacillati</taxon>
        <taxon>Bacillota</taxon>
        <taxon>Bacilli</taxon>
        <taxon>Bacillales</taxon>
        <taxon>Bacillaceae</taxon>
        <taxon>Lysinibacillus</taxon>
    </lineage>
</organism>
<protein>
    <recommendedName>
        <fullName>UPF0309 protein in nagA 3'region</fullName>
    </recommendedName>
    <alternativeName>
        <fullName>Orf2</fullName>
    </alternativeName>
</protein>
<sequence length="240" mass="26494">MMNTYFQQVNRYLTMVAQQESEQINRVAQLIVKRLVQGGIIQLFGSGHSMLLAQECYFRAGGLVPVKPIHIESLMLHQGARQSSQNEKKQAFLAPYKDELQFDDKDVCIIISTSANNPVPIDMAIYAKEAGAHTISLQSLAYQQQPSRHPSGQRLEDIADDVLNTHVPLGDGVLTVDEFQYGPVSTVLGAALLNALCAQIIEILHEQGASLPVFASSNLGNTNNDELIDQYGQRDSFLRP</sequence>
<feature type="chain" id="PRO_0000068177" description="UPF0309 protein in nagA 3'region">
    <location>
        <begin position="1"/>
        <end position="240"/>
    </location>
</feature>
<feature type="domain" description="SIS">
    <location>
        <begin position="31"/>
        <end position="206"/>
    </location>
</feature>
<name>YNAG_LYSSH</name>
<evidence type="ECO:0000305" key="1"/>
<comment type="similarity">
    <text evidence="1">Belongs to the UPF0309 family.</text>
</comment>
<proteinExistence type="inferred from homology"/>
<dbReference type="EMBL" id="AY211495">
    <property type="protein sequence ID" value="AAO43397.1"/>
    <property type="molecule type" value="Genomic_DNA"/>
</dbReference>
<dbReference type="SMR" id="Q84F85"/>
<dbReference type="STRING" id="1421.A2J09_04995"/>
<dbReference type="GO" id="GO:0097367">
    <property type="term" value="F:carbohydrate derivative binding"/>
    <property type="evidence" value="ECO:0007669"/>
    <property type="project" value="InterPro"/>
</dbReference>
<dbReference type="GO" id="GO:1901135">
    <property type="term" value="P:carbohydrate derivative metabolic process"/>
    <property type="evidence" value="ECO:0007669"/>
    <property type="project" value="InterPro"/>
</dbReference>
<dbReference type="CDD" id="cd05013">
    <property type="entry name" value="SIS_RpiR"/>
    <property type="match status" value="1"/>
</dbReference>
<dbReference type="Gene3D" id="3.40.50.10490">
    <property type="entry name" value="Glucose-6-phosphate isomerase like protein, domain 1"/>
    <property type="match status" value="1"/>
</dbReference>
<dbReference type="HAMAP" id="MF_01240">
    <property type="entry name" value="UPF0309"/>
    <property type="match status" value="1"/>
</dbReference>
<dbReference type="InterPro" id="IPR035472">
    <property type="entry name" value="RpiR-like_SIS"/>
</dbReference>
<dbReference type="InterPro" id="IPR001347">
    <property type="entry name" value="SIS_dom"/>
</dbReference>
<dbReference type="InterPro" id="IPR046348">
    <property type="entry name" value="SIS_dom_sf"/>
</dbReference>
<dbReference type="InterPro" id="IPR050099">
    <property type="entry name" value="SIS_GmhA/DiaA_subfam"/>
</dbReference>
<dbReference type="InterPro" id="IPR022951">
    <property type="entry name" value="UPF0309"/>
</dbReference>
<dbReference type="NCBIfam" id="NF002805">
    <property type="entry name" value="PRK02947.1"/>
    <property type="match status" value="1"/>
</dbReference>
<dbReference type="PANTHER" id="PTHR30390:SF7">
    <property type="entry name" value="PHOSPHOHEPTOSE ISOMERASE"/>
    <property type="match status" value="1"/>
</dbReference>
<dbReference type="PANTHER" id="PTHR30390">
    <property type="entry name" value="SEDOHEPTULOSE 7-PHOSPHATE ISOMERASE / DNAA INITIATOR-ASSOCIATING FACTOR FOR REPLICATION INITIATION"/>
    <property type="match status" value="1"/>
</dbReference>
<dbReference type="Pfam" id="PF13580">
    <property type="entry name" value="SIS_2"/>
    <property type="match status" value="1"/>
</dbReference>
<dbReference type="SUPFAM" id="SSF53697">
    <property type="entry name" value="SIS domain"/>
    <property type="match status" value="1"/>
</dbReference>
<dbReference type="PROSITE" id="PS51464">
    <property type="entry name" value="SIS"/>
    <property type="match status" value="1"/>
</dbReference>
<reference key="1">
    <citation type="journal article" date="2003" name="Microbiology">
        <title>Phosphoenolpyruvate phosphotransferase system and N-acetylglucosamine metabolism in Bacillus sphaericus.</title>
        <authorList>
            <person name="Alice A.F."/>
            <person name="Perez-Martinez G."/>
            <person name="Sanchez-Rivas C."/>
        </authorList>
    </citation>
    <scope>NUCLEOTIDE SEQUENCE [GENOMIC DNA]</scope>
    <source>
        <strain>2362</strain>
    </source>
</reference>
<accession>Q84F85</accession>